<gene>
    <name evidence="1" type="primary">cobB1</name>
    <name type="ordered locus">blr4409</name>
</gene>
<comment type="function">
    <text evidence="1">NAD-dependent protein deacetylase which modulates the activities of several enzymes which are inactive in their acetylated form.</text>
</comment>
<comment type="catalytic activity">
    <reaction evidence="1">
        <text>N(6)-acetyl-L-lysyl-[protein] + NAD(+) + H2O = 2''-O-acetyl-ADP-D-ribose + nicotinamide + L-lysyl-[protein]</text>
        <dbReference type="Rhea" id="RHEA:43636"/>
        <dbReference type="Rhea" id="RHEA-COMP:9752"/>
        <dbReference type="Rhea" id="RHEA-COMP:10731"/>
        <dbReference type="ChEBI" id="CHEBI:15377"/>
        <dbReference type="ChEBI" id="CHEBI:17154"/>
        <dbReference type="ChEBI" id="CHEBI:29969"/>
        <dbReference type="ChEBI" id="CHEBI:57540"/>
        <dbReference type="ChEBI" id="CHEBI:61930"/>
        <dbReference type="ChEBI" id="CHEBI:83767"/>
        <dbReference type="EC" id="2.3.1.286"/>
    </reaction>
</comment>
<comment type="cofactor">
    <cofactor evidence="1">
        <name>Zn(2+)</name>
        <dbReference type="ChEBI" id="CHEBI:29105"/>
    </cofactor>
    <text evidence="1">Binds 1 zinc ion per subunit.</text>
</comment>
<comment type="subcellular location">
    <subcellularLocation>
        <location evidence="1">Cytoplasm</location>
    </subcellularLocation>
</comment>
<comment type="similarity">
    <text evidence="1">Belongs to the sirtuin family. Class U subfamily.</text>
</comment>
<organism>
    <name type="scientific">Bradyrhizobium diazoefficiens (strain JCM 10833 / BCRC 13528 / IAM 13628 / NBRC 14792 / USDA 110)</name>
    <dbReference type="NCBI Taxonomy" id="224911"/>
    <lineage>
        <taxon>Bacteria</taxon>
        <taxon>Pseudomonadati</taxon>
        <taxon>Pseudomonadota</taxon>
        <taxon>Alphaproteobacteria</taxon>
        <taxon>Hyphomicrobiales</taxon>
        <taxon>Nitrobacteraceae</taxon>
        <taxon>Bradyrhizobium</taxon>
    </lineage>
</organism>
<reference key="1">
    <citation type="journal article" date="2002" name="DNA Res.">
        <title>Complete genomic sequence of nitrogen-fixing symbiotic bacterium Bradyrhizobium japonicum USDA110.</title>
        <authorList>
            <person name="Kaneko T."/>
            <person name="Nakamura Y."/>
            <person name="Sato S."/>
            <person name="Minamisawa K."/>
            <person name="Uchiumi T."/>
            <person name="Sasamoto S."/>
            <person name="Watanabe A."/>
            <person name="Idesawa K."/>
            <person name="Iriguchi M."/>
            <person name="Kawashima K."/>
            <person name="Kohara M."/>
            <person name="Matsumoto M."/>
            <person name="Shimpo S."/>
            <person name="Tsuruoka H."/>
            <person name="Wada T."/>
            <person name="Yamada M."/>
            <person name="Tabata S."/>
        </authorList>
    </citation>
    <scope>NUCLEOTIDE SEQUENCE [LARGE SCALE GENOMIC DNA]</scope>
    <source>
        <strain>JCM 10833 / BCRC 13528 / IAM 13628 / NBRC 14792 / USDA 110</strain>
    </source>
</reference>
<evidence type="ECO:0000255" key="1">
    <source>
        <dbReference type="HAMAP-Rule" id="MF_01968"/>
    </source>
</evidence>
<evidence type="ECO:0000255" key="2">
    <source>
        <dbReference type="PROSITE-ProRule" id="PRU00236"/>
    </source>
</evidence>
<accession>Q89LY4</accession>
<name>NPD1_BRADU</name>
<dbReference type="EC" id="2.3.1.286" evidence="1 2"/>
<dbReference type="EMBL" id="BA000040">
    <property type="protein sequence ID" value="BAC49674.1"/>
    <property type="molecule type" value="Genomic_DNA"/>
</dbReference>
<dbReference type="RefSeq" id="NP_771049.1">
    <property type="nucleotide sequence ID" value="NC_004463.1"/>
</dbReference>
<dbReference type="SMR" id="Q89LY4"/>
<dbReference type="FunCoup" id="Q89LY4">
    <property type="interactions" value="507"/>
</dbReference>
<dbReference type="STRING" id="224911.AAV28_19175"/>
<dbReference type="EnsemblBacteria" id="BAC49674">
    <property type="protein sequence ID" value="BAC49674"/>
    <property type="gene ID" value="BAC49674"/>
</dbReference>
<dbReference type="KEGG" id="bja:blr4409"/>
<dbReference type="PATRIC" id="fig|224911.5.peg.4455"/>
<dbReference type="eggNOG" id="COG0846">
    <property type="taxonomic scope" value="Bacteria"/>
</dbReference>
<dbReference type="HOGENOM" id="CLU_023643_3_0_5"/>
<dbReference type="InParanoid" id="Q89LY4"/>
<dbReference type="OrthoDB" id="9800582at2"/>
<dbReference type="PhylomeDB" id="Q89LY4"/>
<dbReference type="Proteomes" id="UP000002526">
    <property type="component" value="Chromosome"/>
</dbReference>
<dbReference type="GO" id="GO:0005737">
    <property type="term" value="C:cytoplasm"/>
    <property type="evidence" value="ECO:0007669"/>
    <property type="project" value="UniProtKB-SubCell"/>
</dbReference>
<dbReference type="GO" id="GO:0017136">
    <property type="term" value="F:histone deacetylase activity, NAD-dependent"/>
    <property type="evidence" value="ECO:0000318"/>
    <property type="project" value="GO_Central"/>
</dbReference>
<dbReference type="GO" id="GO:0070403">
    <property type="term" value="F:NAD+ binding"/>
    <property type="evidence" value="ECO:0000318"/>
    <property type="project" value="GO_Central"/>
</dbReference>
<dbReference type="GO" id="GO:0008270">
    <property type="term" value="F:zinc ion binding"/>
    <property type="evidence" value="ECO:0007669"/>
    <property type="project" value="UniProtKB-UniRule"/>
</dbReference>
<dbReference type="CDD" id="cd01410">
    <property type="entry name" value="SIRT7"/>
    <property type="match status" value="1"/>
</dbReference>
<dbReference type="Gene3D" id="2.20.28.200">
    <property type="match status" value="1"/>
</dbReference>
<dbReference type="Gene3D" id="3.40.50.1220">
    <property type="entry name" value="TPP-binding domain"/>
    <property type="match status" value="1"/>
</dbReference>
<dbReference type="HAMAP" id="MF_01968">
    <property type="entry name" value="Sirtuin_ClassU"/>
    <property type="match status" value="1"/>
</dbReference>
<dbReference type="InterPro" id="IPR029035">
    <property type="entry name" value="DHS-like_NAD/FAD-binding_dom"/>
</dbReference>
<dbReference type="InterPro" id="IPR050134">
    <property type="entry name" value="NAD-dep_sirtuin_deacylases"/>
</dbReference>
<dbReference type="InterPro" id="IPR003000">
    <property type="entry name" value="Sirtuin"/>
</dbReference>
<dbReference type="InterPro" id="IPR028628">
    <property type="entry name" value="Sirtuin_class_U"/>
</dbReference>
<dbReference type="InterPro" id="IPR026590">
    <property type="entry name" value="Ssirtuin_cat_dom"/>
</dbReference>
<dbReference type="PANTHER" id="PTHR11085:SF4">
    <property type="entry name" value="NAD-DEPENDENT PROTEIN DEACYLASE"/>
    <property type="match status" value="1"/>
</dbReference>
<dbReference type="PANTHER" id="PTHR11085">
    <property type="entry name" value="NAD-DEPENDENT PROTEIN DEACYLASE SIRTUIN-5, MITOCHONDRIAL-RELATED"/>
    <property type="match status" value="1"/>
</dbReference>
<dbReference type="Pfam" id="PF02146">
    <property type="entry name" value="SIR2"/>
    <property type="match status" value="1"/>
</dbReference>
<dbReference type="SUPFAM" id="SSF52467">
    <property type="entry name" value="DHS-like NAD/FAD-binding domain"/>
    <property type="match status" value="1"/>
</dbReference>
<dbReference type="PROSITE" id="PS50305">
    <property type="entry name" value="SIRTUIN"/>
    <property type="match status" value="1"/>
</dbReference>
<feature type="chain" id="PRO_0000110299" description="NAD-dependent protein deacetylase 1">
    <location>
        <begin position="1"/>
        <end position="254"/>
    </location>
</feature>
<feature type="domain" description="Deacetylase sirtuin-type" evidence="2">
    <location>
        <begin position="5"/>
        <end position="254"/>
    </location>
</feature>
<feature type="active site" description="Proton acceptor" evidence="2">
    <location>
        <position position="128"/>
    </location>
</feature>
<feature type="binding site" evidence="1">
    <location>
        <position position="31"/>
    </location>
    <ligand>
        <name>NAD(+)</name>
        <dbReference type="ChEBI" id="CHEBI:57540"/>
    </ligand>
</feature>
<feature type="binding site" evidence="1">
    <location>
        <position position="35"/>
    </location>
    <ligand>
        <name>NAD(+)</name>
        <dbReference type="ChEBI" id="CHEBI:57540"/>
    </ligand>
</feature>
<feature type="binding site" evidence="1">
    <location>
        <position position="42"/>
    </location>
    <ligand>
        <name>NAD(+)</name>
        <dbReference type="ChEBI" id="CHEBI:57540"/>
    </ligand>
</feature>
<feature type="binding site" evidence="1">
    <location>
        <position position="42"/>
    </location>
    <ligand>
        <name>nicotinamide</name>
        <dbReference type="ChEBI" id="CHEBI:17154"/>
    </ligand>
</feature>
<feature type="binding site" evidence="1">
    <location>
        <position position="43"/>
    </location>
    <ligand>
        <name>NAD(+)</name>
        <dbReference type="ChEBI" id="CHEBI:57540"/>
    </ligand>
</feature>
<feature type="binding site" evidence="1">
    <location>
        <position position="108"/>
    </location>
    <ligand>
        <name>NAD(+)</name>
        <dbReference type="ChEBI" id="CHEBI:57540"/>
    </ligand>
</feature>
<feature type="binding site" evidence="1">
    <location>
        <position position="110"/>
    </location>
    <ligand>
        <name>NAD(+)</name>
        <dbReference type="ChEBI" id="CHEBI:57540"/>
    </ligand>
</feature>
<feature type="binding site" evidence="1">
    <location>
        <position position="110"/>
    </location>
    <ligand>
        <name>nicotinamide</name>
        <dbReference type="ChEBI" id="CHEBI:17154"/>
    </ligand>
</feature>
<feature type="binding site" evidence="1">
    <location>
        <position position="111"/>
    </location>
    <ligand>
        <name>NAD(+)</name>
        <dbReference type="ChEBI" id="CHEBI:57540"/>
    </ligand>
</feature>
<feature type="binding site" evidence="1">
    <location>
        <position position="111"/>
    </location>
    <ligand>
        <name>nicotinamide</name>
        <dbReference type="ChEBI" id="CHEBI:17154"/>
    </ligand>
</feature>
<feature type="binding site" evidence="1">
    <location>
        <position position="128"/>
    </location>
    <ligand>
        <name>NAD(+)</name>
        <dbReference type="ChEBI" id="CHEBI:57540"/>
    </ligand>
</feature>
<feature type="binding site" evidence="1">
    <location>
        <position position="136"/>
    </location>
    <ligand>
        <name>Zn(2+)</name>
        <dbReference type="ChEBI" id="CHEBI:29105"/>
    </ligand>
</feature>
<feature type="binding site" evidence="1">
    <location>
        <position position="139"/>
    </location>
    <ligand>
        <name>Zn(2+)</name>
        <dbReference type="ChEBI" id="CHEBI:29105"/>
    </ligand>
</feature>
<feature type="binding site" evidence="1">
    <location>
        <position position="160"/>
    </location>
    <ligand>
        <name>Zn(2+)</name>
        <dbReference type="ChEBI" id="CHEBI:29105"/>
    </ligand>
</feature>
<feature type="binding site" evidence="1">
    <location>
        <position position="163"/>
    </location>
    <ligand>
        <name>Zn(2+)</name>
        <dbReference type="ChEBI" id="CHEBI:29105"/>
    </ligand>
</feature>
<feature type="binding site" evidence="1">
    <location>
        <position position="201"/>
    </location>
    <ligand>
        <name>NAD(+)</name>
        <dbReference type="ChEBI" id="CHEBI:57540"/>
    </ligand>
</feature>
<feature type="binding site" evidence="1">
    <location>
        <position position="202"/>
    </location>
    <ligand>
        <name>NAD(+)</name>
        <dbReference type="ChEBI" id="CHEBI:57540"/>
    </ligand>
</feature>
<feature type="binding site" evidence="1">
    <location>
        <position position="226"/>
    </location>
    <ligand>
        <name>NAD(+)</name>
        <dbReference type="ChEBI" id="CHEBI:57540"/>
    </ligand>
</feature>
<feature type="binding site" evidence="1">
    <location>
        <position position="243"/>
    </location>
    <ligand>
        <name>NAD(+)</name>
        <dbReference type="ChEBI" id="CHEBI:57540"/>
    </ligand>
</feature>
<feature type="binding site" evidence="1">
    <location>
        <position position="244"/>
    </location>
    <ligand>
        <name>NAD(+)</name>
        <dbReference type="ChEBI" id="CHEBI:57540"/>
    </ligand>
</feature>
<sequence>MRLIASDLRSGVERLGDMIAEAKTIVPFTGAGISTECGIPDFRSPGGIWTRNRPIPFDGFVASQEARDESWRRRFAMEETFAAARPGRGHRALASLYRAGKVPAVITQNIDNLHQASGFAHEHVIELHGNTTYARCVGCGQTYQLDWVKRRFDQDGAPNCTVCDEPVKTATISFGQMMPEEEMQRATALSRACDLFIAIGSSLVVWPAAGFPMMAKRAGARLVIINREPTEQDDIADLVIRHDIGETLGPFVGN</sequence>
<protein>
    <recommendedName>
        <fullName evidence="1">NAD-dependent protein deacetylase 1</fullName>
        <ecNumber evidence="1 2">2.3.1.286</ecNumber>
    </recommendedName>
    <alternativeName>
        <fullName evidence="1">Regulatory protein SIR2 homolog 1</fullName>
    </alternativeName>
</protein>
<proteinExistence type="inferred from homology"/>
<keyword id="KW-0963">Cytoplasm</keyword>
<keyword id="KW-0479">Metal-binding</keyword>
<keyword id="KW-0520">NAD</keyword>
<keyword id="KW-1185">Reference proteome</keyword>
<keyword id="KW-0808">Transferase</keyword>
<keyword id="KW-0862">Zinc</keyword>